<evidence type="ECO:0000250" key="1">
    <source>
        <dbReference type="UniProtKB" id="E1BUG7"/>
    </source>
</evidence>
<evidence type="ECO:0000250" key="2">
    <source>
        <dbReference type="UniProtKB" id="Q68D10"/>
    </source>
</evidence>
<evidence type="ECO:0000255" key="3"/>
<evidence type="ECO:0000256" key="4">
    <source>
        <dbReference type="SAM" id="MobiDB-lite"/>
    </source>
</evidence>
<evidence type="ECO:0000269" key="5">
    <source>
    </source>
</evidence>
<evidence type="ECO:0000305" key="6"/>
<proteinExistence type="evidence at transcript level"/>
<protein>
    <recommendedName>
        <fullName>Protein SPT2 homolog</fullName>
    </recommendedName>
    <alternativeName>
        <fullName>Protein P16H6</fullName>
    </alternativeName>
    <alternativeName>
        <fullName>SPT2 domain-containing protein 1</fullName>
    </alternativeName>
</protein>
<name>SPT2_XENLA</name>
<sequence>MDFHSVLRMAAAKPGPDGVMKRYSLAVGPPRKDPKVKGVNSAAVQAFLRKKDQEIQNKEVEAKRKKEGLLAKRKELKHDRKARAMASRTKDNFRGYNGIPVEEKPKKHKGSGLEEGPNESMQSTEEDEEYMTEEELYEYSQSESEREEEQEEMPPQKVAKAAPGKKPPPPALNFTELLRLAERKQHEPVEVIRPLKKEERLRTAEELKELEFLERKAQKADRKDPMRNGQVVKISKGSGDKYYSLKGSHSVEKRSHENSKSSSTEQNGTFRKSSSDNRSREEKSGSVFHTKDSKFPTKSSSAKDCGAKGFRPSATGDCKNRNDSTRASGSTSLRPSSGGSSSVSGRPSGSSEKPGSSSGKPMGGSGSSSARSSSGSGKPTGATGSGKPTGASGSGSARSVGESGSRSGKPTGASGSGLARSVGASGSGSGKPTGATDSGRPTGVSGSGSARSVGASGSGKPTGASVSGSARSVGASGSGKPTGASGSGSARSVGASRSVSGKPTGASGSGKPTGAPGASSGKPAGVSGSVSSFARPRSNSSMAPAKPAASSGSARPSSSGTPRASSTGNSSSNYSRQASSSGAVRPSSGPPTGGTPKGPSPRPGTGPNSVRHNTTSISVSARSSLGSGPGRPVAASATGQSAMAKPKCTVVAETISSKNFVPKSINGHMNGMRSAVPPGHRPNMQPPGRPLPPITSSYKRRIDDDEYDSEMDDFIDDGGECQDEISKHIREIFGYDRNRYRDESDYALRYMESSFREQQKEEARSLRLGIQEDLEELRREEEELKQKAKQLKSAKKMKSR</sequence>
<feature type="chain" id="PRO_0000315739" description="Protein SPT2 homolog">
    <location>
        <begin position="1"/>
        <end position="800"/>
    </location>
</feature>
<feature type="region of interest" description="Important for interaction with DNA" evidence="2">
    <location>
        <begin position="1"/>
        <end position="687"/>
    </location>
</feature>
<feature type="region of interest" description="Disordered" evidence="4">
    <location>
        <begin position="70"/>
        <end position="173"/>
    </location>
</feature>
<feature type="region of interest" description="Disordered" evidence="4">
    <location>
        <begin position="197"/>
        <end position="646"/>
    </location>
</feature>
<feature type="region of interest" description="Disordered" evidence="4">
    <location>
        <begin position="661"/>
        <end position="698"/>
    </location>
</feature>
<feature type="region of interest" description="Important for interaction with histones" evidence="2">
    <location>
        <begin position="688"/>
        <end position="800"/>
    </location>
</feature>
<feature type="coiled-coil region" evidence="3">
    <location>
        <begin position="53"/>
        <end position="82"/>
    </location>
</feature>
<feature type="coiled-coil region" evidence="3">
    <location>
        <begin position="196"/>
        <end position="224"/>
    </location>
</feature>
<feature type="coiled-coil region" evidence="3">
    <location>
        <begin position="756"/>
        <end position="800"/>
    </location>
</feature>
<feature type="compositionally biased region" description="Acidic residues" evidence="4">
    <location>
        <begin position="124"/>
        <end position="137"/>
    </location>
</feature>
<feature type="compositionally biased region" description="Low complexity" evidence="4">
    <location>
        <begin position="155"/>
        <end position="164"/>
    </location>
</feature>
<feature type="compositionally biased region" description="Basic and acidic residues" evidence="4">
    <location>
        <begin position="197"/>
        <end position="226"/>
    </location>
</feature>
<feature type="compositionally biased region" description="Basic and acidic residues" evidence="4">
    <location>
        <begin position="249"/>
        <end position="259"/>
    </location>
</feature>
<feature type="compositionally biased region" description="Polar residues" evidence="4">
    <location>
        <begin position="260"/>
        <end position="272"/>
    </location>
</feature>
<feature type="compositionally biased region" description="Basic and acidic residues" evidence="4">
    <location>
        <begin position="273"/>
        <end position="295"/>
    </location>
</feature>
<feature type="compositionally biased region" description="Low complexity" evidence="4">
    <location>
        <begin position="328"/>
        <end position="360"/>
    </location>
</feature>
<feature type="compositionally biased region" description="Low complexity" evidence="4">
    <location>
        <begin position="367"/>
        <end position="377"/>
    </location>
</feature>
<feature type="compositionally biased region" description="Low complexity" evidence="4">
    <location>
        <begin position="390"/>
        <end position="424"/>
    </location>
</feature>
<feature type="compositionally biased region" description="Low complexity" evidence="4">
    <location>
        <begin position="443"/>
        <end position="501"/>
    </location>
</feature>
<feature type="compositionally biased region" description="Low complexity" evidence="4">
    <location>
        <begin position="514"/>
        <end position="581"/>
    </location>
</feature>
<feature type="compositionally biased region" description="Polar residues" evidence="4">
    <location>
        <begin position="608"/>
        <end position="626"/>
    </location>
</feature>
<feature type="compositionally biased region" description="Pro residues" evidence="4">
    <location>
        <begin position="684"/>
        <end position="693"/>
    </location>
</feature>
<keyword id="KW-0175">Coiled coil</keyword>
<keyword id="KW-0238">DNA-binding</keyword>
<keyword id="KW-0539">Nucleus</keyword>
<keyword id="KW-1185">Reference proteome</keyword>
<keyword id="KW-0804">Transcription</keyword>
<keyword id="KW-0805">Transcription regulation</keyword>
<dbReference type="EMBL" id="BC068789">
    <property type="protein sequence ID" value="AAH68789.1"/>
    <property type="molecule type" value="mRNA"/>
</dbReference>
<dbReference type="EMBL" id="AB072003">
    <property type="protein sequence ID" value="BAB79594.1"/>
    <property type="molecule type" value="mRNA"/>
</dbReference>
<dbReference type="RefSeq" id="NP_001131040.1">
    <property type="nucleotide sequence ID" value="NM_001137568.1"/>
</dbReference>
<dbReference type="DNASU" id="398281"/>
<dbReference type="GeneID" id="398281"/>
<dbReference type="KEGG" id="xla:398281"/>
<dbReference type="AGR" id="Xenbase:XB-GENE-5940059"/>
<dbReference type="CTD" id="398281"/>
<dbReference type="Xenbase" id="XB-GENE-5940059">
    <property type="gene designation" value="spty2d1.S"/>
</dbReference>
<dbReference type="OrthoDB" id="6259853at2759"/>
<dbReference type="Proteomes" id="UP000186698">
    <property type="component" value="Chromosome 4S"/>
</dbReference>
<dbReference type="Bgee" id="398281">
    <property type="expression patterns" value="Expressed in blastula and 19 other cell types or tissues"/>
</dbReference>
<dbReference type="GO" id="GO:0005730">
    <property type="term" value="C:nucleolus"/>
    <property type="evidence" value="ECO:0000250"/>
    <property type="project" value="UniProtKB"/>
</dbReference>
<dbReference type="GO" id="GO:0003677">
    <property type="term" value="F:DNA binding"/>
    <property type="evidence" value="ECO:0000250"/>
    <property type="project" value="UniProtKB"/>
</dbReference>
<dbReference type="GO" id="GO:0042393">
    <property type="term" value="F:histone binding"/>
    <property type="evidence" value="ECO:0000250"/>
    <property type="project" value="UniProtKB"/>
</dbReference>
<dbReference type="GO" id="GO:0140713">
    <property type="term" value="F:histone chaperone activity"/>
    <property type="evidence" value="ECO:0000250"/>
    <property type="project" value="UniProtKB"/>
</dbReference>
<dbReference type="GO" id="GO:0001042">
    <property type="term" value="F:RNA polymerase I core binding"/>
    <property type="evidence" value="ECO:0000250"/>
    <property type="project" value="UniProtKB"/>
</dbReference>
<dbReference type="GO" id="GO:0031507">
    <property type="term" value="P:heterochromatin formation"/>
    <property type="evidence" value="ECO:0000250"/>
    <property type="project" value="UniProtKB"/>
</dbReference>
<dbReference type="GO" id="GO:0006334">
    <property type="term" value="P:nucleosome assembly"/>
    <property type="evidence" value="ECO:0000250"/>
    <property type="project" value="UniProtKB"/>
</dbReference>
<dbReference type="GO" id="GO:0006355">
    <property type="term" value="P:regulation of DNA-templated transcription"/>
    <property type="evidence" value="ECO:0000250"/>
    <property type="project" value="UniProtKB"/>
</dbReference>
<dbReference type="GO" id="GO:0006360">
    <property type="term" value="P:transcription by RNA polymerase I"/>
    <property type="evidence" value="ECO:0000318"/>
    <property type="project" value="GO_Central"/>
</dbReference>
<dbReference type="InterPro" id="IPR013256">
    <property type="entry name" value="Chromatin_SPT2"/>
</dbReference>
<dbReference type="InterPro" id="IPR054552">
    <property type="entry name" value="SPT2_N"/>
</dbReference>
<dbReference type="PANTHER" id="PTHR22691:SF8">
    <property type="entry name" value="PROTEIN SPT2 HOMOLOG"/>
    <property type="match status" value="1"/>
</dbReference>
<dbReference type="PANTHER" id="PTHR22691">
    <property type="entry name" value="YEAST SPT2-RELATED"/>
    <property type="match status" value="1"/>
</dbReference>
<dbReference type="Pfam" id="PF08243">
    <property type="entry name" value="SPT2"/>
    <property type="match status" value="1"/>
</dbReference>
<dbReference type="Pfam" id="PF22878">
    <property type="entry name" value="SPT2_N"/>
    <property type="match status" value="1"/>
</dbReference>
<dbReference type="SMART" id="SM00784">
    <property type="entry name" value="SPT2"/>
    <property type="match status" value="1"/>
</dbReference>
<organism>
    <name type="scientific">Xenopus laevis</name>
    <name type="common">African clawed frog</name>
    <dbReference type="NCBI Taxonomy" id="8355"/>
    <lineage>
        <taxon>Eukaryota</taxon>
        <taxon>Metazoa</taxon>
        <taxon>Chordata</taxon>
        <taxon>Craniata</taxon>
        <taxon>Vertebrata</taxon>
        <taxon>Euteleostomi</taxon>
        <taxon>Amphibia</taxon>
        <taxon>Batrachia</taxon>
        <taxon>Anura</taxon>
        <taxon>Pipoidea</taxon>
        <taxon>Pipidae</taxon>
        <taxon>Xenopodinae</taxon>
        <taxon>Xenopus</taxon>
        <taxon>Xenopus</taxon>
    </lineage>
</organism>
<comment type="function">
    <text evidence="1 2">Histone chaperone that stabilizes pre-existing histone tetramers and regulates replication-independent histone exchange on chromatin. Required for normal chromatin refolding in the coding region of transcribed genes, and for the suppression of spurious transcription. Binds DNA and histones and promotes nucleosome assembly (in vitro). Facilitates formation of tetrameric histone complexes containing histone H3 and H4 (By similarity). Modulates RNA polymerase 1-mediated transcription (By similarity). Binds DNA, with a preference for branched DNA species, such as Y-form DNA and Holliday junction DNA (By similarity).</text>
</comment>
<comment type="subunit">
    <text evidence="2">Interacts with histones. Interacts with a heterotetrameric complex formed by histone H3 and H4, especially when the histone tetramer is not bound to DNA.</text>
</comment>
<comment type="subcellular location">
    <subcellularLocation>
        <location evidence="1">Nucleus</location>
        <location evidence="1">Nucleolus</location>
    </subcellularLocation>
</comment>
<comment type="developmental stage">
    <text evidence="5">Highly expressed at stage 9, then gradually decrease.</text>
</comment>
<comment type="domain">
    <text evidence="2">The acidic C-terminal domain mediates interaction with histone H3/H4 complexes.</text>
</comment>
<comment type="similarity">
    <text evidence="6">Belongs to the SPT2 family.</text>
</comment>
<accession>Q6NU13</accession>
<accession>Q8UW69</accession>
<gene>
    <name type="primary">spty2d1</name>
</gene>
<reference key="1">
    <citation type="submission" date="2004-04" db="EMBL/GenBank/DDBJ databases">
        <authorList>
            <consortium name="NIH - Xenopus Gene Collection (XGC) project"/>
        </authorList>
    </citation>
    <scope>NUCLEOTIDE SEQUENCE [LARGE SCALE MRNA]</scope>
    <source>
        <tissue>Embryo</tissue>
    </source>
</reference>
<reference key="2">
    <citation type="journal article" date="2001" name="Dev. Biol.">
        <title>Systematic screening and expression analysis of the head organizer genes in Xenopus embryos.</title>
        <authorList>
            <person name="Shibata M."/>
            <person name="Itoh M."/>
            <person name="Ohmori S.Y."/>
            <person name="Shinga J."/>
            <person name="Taira M."/>
        </authorList>
    </citation>
    <scope>NUCLEOTIDE SEQUENCE [MRNA] OF 714-800</scope>
    <scope>DEVELOPMENTAL STAGE</scope>
</reference>